<reference key="1">
    <citation type="submission" date="2008-02" db="EMBL/GenBank/DDBJ databases">
        <title>Complete sequence of Shewanella woodyi ATCC 51908.</title>
        <authorList>
            <consortium name="US DOE Joint Genome Institute"/>
            <person name="Copeland A."/>
            <person name="Lucas S."/>
            <person name="Lapidus A."/>
            <person name="Glavina del Rio T."/>
            <person name="Dalin E."/>
            <person name="Tice H."/>
            <person name="Bruce D."/>
            <person name="Goodwin L."/>
            <person name="Pitluck S."/>
            <person name="Sims D."/>
            <person name="Brettin T."/>
            <person name="Detter J.C."/>
            <person name="Han C."/>
            <person name="Kuske C.R."/>
            <person name="Schmutz J."/>
            <person name="Larimer F."/>
            <person name="Land M."/>
            <person name="Hauser L."/>
            <person name="Kyrpides N."/>
            <person name="Lykidis A."/>
            <person name="Zhao J.-S."/>
            <person name="Richardson P."/>
        </authorList>
    </citation>
    <scope>NUCLEOTIDE SEQUENCE [LARGE SCALE GENOMIC DNA]</scope>
    <source>
        <strain>ATCC 51908 / MS32</strain>
    </source>
</reference>
<sequence length="577" mass="64444">MSDGKSVEKEEALSVNEHLKTDSDFLRGTIQEGLDTAVTGSFSEGDQQLIKFHGFYQQDDRDLRNERKEQKLEPLYSFMLRARVAGGVCSPEQWLGVDEISSTLTSSNSIRLTTRQTFQYHGISKRNLRTLIQGLDSKALDSIAACGDVNRNVMCNPNPVESRLHEQAYYWAKQLSDQYLPRTKAYAEIWLGDDKVATSEGDDVEPVYGKTYLPRKFKMAVAVPPDNDVDVYTNDLGFVAVAEEGELVGFNLVAGGGMGSTHGEVQTFPRLADDFGFIKAEDTLKFAEAVLKVQRDWGNRSNRKLSRLKYTIVKYGYEAFKAEVEKRAGVKFEPKRDVVIGDRGDRYGWIKGVDNKWHLTLFIEGGRIKDLPGQPLQTGLREIAKIHKGDFRMTSNQNFIIASVAEEDKAEIEALARSHGLMGKLITETRGRSIACVALPTCALAMAEAERYFPDFLSKVESLQEKHGFLDQGIVIRMTGCPNGCARPFAAEIGLVGKAPGRYNLYLGASFEGTRLNKLYRENIQEAEILSELDSLFARYVAEREEGETFGNFTVRIGAVSAVIDAAKDFHEQHNHA</sequence>
<name>CYSI_SHEWM</name>
<evidence type="ECO:0000255" key="1">
    <source>
        <dbReference type="HAMAP-Rule" id="MF_01540"/>
    </source>
</evidence>
<evidence type="ECO:0000305" key="2"/>
<accession>B1KE86</accession>
<organism>
    <name type="scientific">Shewanella woodyi (strain ATCC 51908 / MS32)</name>
    <dbReference type="NCBI Taxonomy" id="392500"/>
    <lineage>
        <taxon>Bacteria</taxon>
        <taxon>Pseudomonadati</taxon>
        <taxon>Pseudomonadota</taxon>
        <taxon>Gammaproteobacteria</taxon>
        <taxon>Alteromonadales</taxon>
        <taxon>Shewanellaceae</taxon>
        <taxon>Shewanella</taxon>
    </lineage>
</organism>
<protein>
    <recommendedName>
        <fullName evidence="1">Sulfite reductase [NADPH] hemoprotein beta-component</fullName>
        <shortName evidence="1">SiR-HP</shortName>
        <shortName evidence="1">SiRHP</shortName>
        <ecNumber evidence="1">1.8.1.2</ecNumber>
    </recommendedName>
</protein>
<keyword id="KW-0004">4Fe-4S</keyword>
<keyword id="KW-0028">Amino-acid biosynthesis</keyword>
<keyword id="KW-0198">Cysteine biosynthesis</keyword>
<keyword id="KW-0349">Heme</keyword>
<keyword id="KW-0408">Iron</keyword>
<keyword id="KW-0411">Iron-sulfur</keyword>
<keyword id="KW-0479">Metal-binding</keyword>
<keyword id="KW-0521">NADP</keyword>
<keyword id="KW-0560">Oxidoreductase</keyword>
<keyword id="KW-1185">Reference proteome</keyword>
<comment type="function">
    <text evidence="1">Component of the sulfite reductase complex that catalyzes the 6-electron reduction of sulfite to sulfide. This is one of several activities required for the biosynthesis of L-cysteine from sulfate.</text>
</comment>
<comment type="catalytic activity">
    <reaction evidence="1">
        <text>hydrogen sulfide + 3 NADP(+) + 3 H2O = sulfite + 3 NADPH + 4 H(+)</text>
        <dbReference type="Rhea" id="RHEA:13801"/>
        <dbReference type="ChEBI" id="CHEBI:15377"/>
        <dbReference type="ChEBI" id="CHEBI:15378"/>
        <dbReference type="ChEBI" id="CHEBI:17359"/>
        <dbReference type="ChEBI" id="CHEBI:29919"/>
        <dbReference type="ChEBI" id="CHEBI:57783"/>
        <dbReference type="ChEBI" id="CHEBI:58349"/>
        <dbReference type="EC" id="1.8.1.2"/>
    </reaction>
</comment>
<comment type="cofactor">
    <cofactor evidence="1">
        <name>siroheme</name>
        <dbReference type="ChEBI" id="CHEBI:60052"/>
    </cofactor>
    <text evidence="1">Binds 1 siroheme per subunit.</text>
</comment>
<comment type="cofactor">
    <cofactor evidence="1">
        <name>[4Fe-4S] cluster</name>
        <dbReference type="ChEBI" id="CHEBI:49883"/>
    </cofactor>
    <text evidence="1">Binds 1 [4Fe-4S] cluster per subunit.</text>
</comment>
<comment type="pathway">
    <text evidence="1">Sulfur metabolism; hydrogen sulfide biosynthesis; hydrogen sulfide from sulfite (NADPH route): step 1/1.</text>
</comment>
<comment type="subunit">
    <text evidence="1">Alpha(8)-beta(8). The alpha component is a flavoprotein, the beta component is a hemoprotein.</text>
</comment>
<comment type="similarity">
    <text evidence="1">Belongs to the nitrite and sulfite reductase 4Fe-4S domain family.</text>
</comment>
<comment type="sequence caution" evidence="2">
    <conflict type="erroneous initiation">
        <sequence resource="EMBL-CDS" id="ACA85072"/>
    </conflict>
</comment>
<dbReference type="EC" id="1.8.1.2" evidence="1"/>
<dbReference type="EMBL" id="CP000961">
    <property type="protein sequence ID" value="ACA85072.1"/>
    <property type="status" value="ALT_INIT"/>
    <property type="molecule type" value="Genomic_DNA"/>
</dbReference>
<dbReference type="RefSeq" id="WP_041417944.1">
    <property type="nucleotide sequence ID" value="NC_010506.1"/>
</dbReference>
<dbReference type="SMR" id="B1KE86"/>
<dbReference type="STRING" id="392500.Swoo_0777"/>
<dbReference type="KEGG" id="swd:Swoo_0777"/>
<dbReference type="eggNOG" id="COG0155">
    <property type="taxonomic scope" value="Bacteria"/>
</dbReference>
<dbReference type="HOGENOM" id="CLU_001975_3_2_6"/>
<dbReference type="UniPathway" id="UPA00140">
    <property type="reaction ID" value="UER00207"/>
</dbReference>
<dbReference type="Proteomes" id="UP000002168">
    <property type="component" value="Chromosome"/>
</dbReference>
<dbReference type="GO" id="GO:0009337">
    <property type="term" value="C:sulfite reductase complex (NADPH)"/>
    <property type="evidence" value="ECO:0007669"/>
    <property type="project" value="InterPro"/>
</dbReference>
<dbReference type="GO" id="GO:0051539">
    <property type="term" value="F:4 iron, 4 sulfur cluster binding"/>
    <property type="evidence" value="ECO:0007669"/>
    <property type="project" value="UniProtKB-KW"/>
</dbReference>
<dbReference type="GO" id="GO:0020037">
    <property type="term" value="F:heme binding"/>
    <property type="evidence" value="ECO:0007669"/>
    <property type="project" value="InterPro"/>
</dbReference>
<dbReference type="GO" id="GO:0046872">
    <property type="term" value="F:metal ion binding"/>
    <property type="evidence" value="ECO:0007669"/>
    <property type="project" value="UniProtKB-KW"/>
</dbReference>
<dbReference type="GO" id="GO:0050661">
    <property type="term" value="F:NADP binding"/>
    <property type="evidence" value="ECO:0007669"/>
    <property type="project" value="InterPro"/>
</dbReference>
<dbReference type="GO" id="GO:0050311">
    <property type="term" value="F:sulfite reductase (ferredoxin) activity"/>
    <property type="evidence" value="ECO:0007669"/>
    <property type="project" value="TreeGrafter"/>
</dbReference>
<dbReference type="GO" id="GO:0004783">
    <property type="term" value="F:sulfite reductase (NADPH) activity"/>
    <property type="evidence" value="ECO:0007669"/>
    <property type="project" value="UniProtKB-UniRule"/>
</dbReference>
<dbReference type="GO" id="GO:0019344">
    <property type="term" value="P:cysteine biosynthetic process"/>
    <property type="evidence" value="ECO:0007669"/>
    <property type="project" value="UniProtKB-KW"/>
</dbReference>
<dbReference type="GO" id="GO:0070814">
    <property type="term" value="P:hydrogen sulfide biosynthetic process"/>
    <property type="evidence" value="ECO:0007669"/>
    <property type="project" value="UniProtKB-UniRule"/>
</dbReference>
<dbReference type="GO" id="GO:0000103">
    <property type="term" value="P:sulfate assimilation"/>
    <property type="evidence" value="ECO:0007669"/>
    <property type="project" value="UniProtKB-UniRule"/>
</dbReference>
<dbReference type="FunFam" id="3.30.413.10:FF:000003">
    <property type="entry name" value="Sulfite reductase [NADPH] hemoprotein beta-component"/>
    <property type="match status" value="1"/>
</dbReference>
<dbReference type="FunFam" id="3.30.413.10:FF:000004">
    <property type="entry name" value="Sulfite reductase [NADPH] hemoprotein beta-component"/>
    <property type="match status" value="1"/>
</dbReference>
<dbReference type="Gene3D" id="3.30.413.10">
    <property type="entry name" value="Sulfite Reductase Hemoprotein, domain 1"/>
    <property type="match status" value="2"/>
</dbReference>
<dbReference type="HAMAP" id="MF_01540">
    <property type="entry name" value="CysI"/>
    <property type="match status" value="1"/>
</dbReference>
<dbReference type="InterPro" id="IPR011786">
    <property type="entry name" value="CysI"/>
</dbReference>
<dbReference type="InterPro" id="IPR005117">
    <property type="entry name" value="NiRdtase/SiRdtase_haem-b_fer"/>
</dbReference>
<dbReference type="InterPro" id="IPR036136">
    <property type="entry name" value="Nit/Sulf_reduc_fer-like_dom_sf"/>
</dbReference>
<dbReference type="InterPro" id="IPR006067">
    <property type="entry name" value="NO2/SO3_Rdtase_4Fe4S_dom"/>
</dbReference>
<dbReference type="InterPro" id="IPR045169">
    <property type="entry name" value="NO2/SO3_Rdtase_4Fe4S_prot"/>
</dbReference>
<dbReference type="InterPro" id="IPR045854">
    <property type="entry name" value="NO2/SO3_Rdtase_4Fe4S_sf"/>
</dbReference>
<dbReference type="InterPro" id="IPR006066">
    <property type="entry name" value="NO2/SO3_Rdtase_FeS/sirohaem_BS"/>
</dbReference>
<dbReference type="NCBIfam" id="TIGR02041">
    <property type="entry name" value="CysI"/>
    <property type="match status" value="1"/>
</dbReference>
<dbReference type="NCBIfam" id="NF010029">
    <property type="entry name" value="PRK13504.1"/>
    <property type="match status" value="1"/>
</dbReference>
<dbReference type="PANTHER" id="PTHR11493:SF47">
    <property type="entry name" value="SULFITE REDUCTASE [NADPH] SUBUNIT BETA"/>
    <property type="match status" value="1"/>
</dbReference>
<dbReference type="PANTHER" id="PTHR11493">
    <property type="entry name" value="SULFITE REDUCTASE [NADPH] SUBUNIT BETA-RELATED"/>
    <property type="match status" value="1"/>
</dbReference>
<dbReference type="Pfam" id="PF01077">
    <property type="entry name" value="NIR_SIR"/>
    <property type="match status" value="1"/>
</dbReference>
<dbReference type="Pfam" id="PF03460">
    <property type="entry name" value="NIR_SIR_ferr"/>
    <property type="match status" value="2"/>
</dbReference>
<dbReference type="PRINTS" id="PR00397">
    <property type="entry name" value="SIROHAEM"/>
</dbReference>
<dbReference type="SUPFAM" id="SSF56014">
    <property type="entry name" value="Nitrite and sulphite reductase 4Fe-4S domain-like"/>
    <property type="match status" value="2"/>
</dbReference>
<dbReference type="SUPFAM" id="SSF55124">
    <property type="entry name" value="Nitrite/Sulfite reductase N-terminal domain-like"/>
    <property type="match status" value="2"/>
</dbReference>
<dbReference type="PROSITE" id="PS00365">
    <property type="entry name" value="NIR_SIR"/>
    <property type="match status" value="1"/>
</dbReference>
<feature type="chain" id="PRO_0000388519" description="Sulfite reductase [NADPH] hemoprotein beta-component">
    <location>
        <begin position="1"/>
        <end position="577"/>
    </location>
</feature>
<feature type="binding site" evidence="1">
    <location>
        <position position="436"/>
    </location>
    <ligand>
        <name>[4Fe-4S] cluster</name>
        <dbReference type="ChEBI" id="CHEBI:49883"/>
    </ligand>
</feature>
<feature type="binding site" evidence="1">
    <location>
        <position position="442"/>
    </location>
    <ligand>
        <name>[4Fe-4S] cluster</name>
        <dbReference type="ChEBI" id="CHEBI:49883"/>
    </ligand>
</feature>
<feature type="binding site" evidence="1">
    <location>
        <position position="481"/>
    </location>
    <ligand>
        <name>[4Fe-4S] cluster</name>
        <dbReference type="ChEBI" id="CHEBI:49883"/>
    </ligand>
</feature>
<feature type="binding site" evidence="1">
    <location>
        <position position="485"/>
    </location>
    <ligand>
        <name>[4Fe-4S] cluster</name>
        <dbReference type="ChEBI" id="CHEBI:49883"/>
    </ligand>
</feature>
<feature type="binding site" description="axial binding residue" evidence="1">
    <location>
        <position position="485"/>
    </location>
    <ligand>
        <name>siroheme</name>
        <dbReference type="ChEBI" id="CHEBI:60052"/>
    </ligand>
    <ligandPart>
        <name>Fe</name>
        <dbReference type="ChEBI" id="CHEBI:18248"/>
    </ligandPart>
</feature>
<gene>
    <name evidence="1" type="primary">cysI</name>
    <name type="ordered locus">Swoo_0777</name>
</gene>
<proteinExistence type="inferred from homology"/>